<gene>
    <name evidence="1" type="primary">recR</name>
    <name type="ordered locus">Mvan_5527</name>
</gene>
<accession>A1TGJ3</accession>
<name>RECR_MYCVP</name>
<sequence>MFEGPVQDLIDELGKLPGIGPKSAQRIAFHLLSVEPPDIDRLTAVLNKVRDGVTFCAVCGNVSDEERCRICGDARRDASLICVVEEPKDVQAVERTREFRGRYHVLGGALDPLSGIGPDQLRIRELLNRIGERVDGVEVAEVIIATDPNTEGEATATYLVRMLRDIPGLTVTRIASGLPMGGDLEFADELTLGRALAGRRAMA</sequence>
<organism>
    <name type="scientific">Mycolicibacterium vanbaalenii (strain DSM 7251 / JCM 13017 / BCRC 16820 / KCTC 9966 / NRRL B-24157 / PYR-1)</name>
    <name type="common">Mycobacterium vanbaalenii</name>
    <dbReference type="NCBI Taxonomy" id="350058"/>
    <lineage>
        <taxon>Bacteria</taxon>
        <taxon>Bacillati</taxon>
        <taxon>Actinomycetota</taxon>
        <taxon>Actinomycetes</taxon>
        <taxon>Mycobacteriales</taxon>
        <taxon>Mycobacteriaceae</taxon>
        <taxon>Mycolicibacterium</taxon>
    </lineage>
</organism>
<reference key="1">
    <citation type="submission" date="2006-12" db="EMBL/GenBank/DDBJ databases">
        <title>Complete sequence of Mycobacterium vanbaalenii PYR-1.</title>
        <authorList>
            <consortium name="US DOE Joint Genome Institute"/>
            <person name="Copeland A."/>
            <person name="Lucas S."/>
            <person name="Lapidus A."/>
            <person name="Barry K."/>
            <person name="Detter J.C."/>
            <person name="Glavina del Rio T."/>
            <person name="Hammon N."/>
            <person name="Israni S."/>
            <person name="Dalin E."/>
            <person name="Tice H."/>
            <person name="Pitluck S."/>
            <person name="Singan V."/>
            <person name="Schmutz J."/>
            <person name="Larimer F."/>
            <person name="Land M."/>
            <person name="Hauser L."/>
            <person name="Kyrpides N."/>
            <person name="Anderson I.J."/>
            <person name="Miller C."/>
            <person name="Richardson P."/>
        </authorList>
    </citation>
    <scope>NUCLEOTIDE SEQUENCE [LARGE SCALE GENOMIC DNA]</scope>
    <source>
        <strain>DSM 7251 / JCM 13017 / BCRC 16820 / KCTC 9966 / NRRL B-24157 / PYR-1</strain>
    </source>
</reference>
<dbReference type="EMBL" id="CP000511">
    <property type="protein sequence ID" value="ABM16293.1"/>
    <property type="molecule type" value="Genomic_DNA"/>
</dbReference>
<dbReference type="RefSeq" id="WP_011782646.1">
    <property type="nucleotide sequence ID" value="NZ_JACKSD010000145.1"/>
</dbReference>
<dbReference type="SMR" id="A1TGJ3"/>
<dbReference type="STRING" id="350058.Mvan_5527"/>
<dbReference type="KEGG" id="mva:Mvan_5527"/>
<dbReference type="eggNOG" id="COG0353">
    <property type="taxonomic scope" value="Bacteria"/>
</dbReference>
<dbReference type="HOGENOM" id="CLU_060739_1_0_11"/>
<dbReference type="Proteomes" id="UP000009159">
    <property type="component" value="Chromosome"/>
</dbReference>
<dbReference type="GO" id="GO:0003677">
    <property type="term" value="F:DNA binding"/>
    <property type="evidence" value="ECO:0007669"/>
    <property type="project" value="UniProtKB-UniRule"/>
</dbReference>
<dbReference type="GO" id="GO:0008270">
    <property type="term" value="F:zinc ion binding"/>
    <property type="evidence" value="ECO:0007669"/>
    <property type="project" value="UniProtKB-KW"/>
</dbReference>
<dbReference type="GO" id="GO:0006310">
    <property type="term" value="P:DNA recombination"/>
    <property type="evidence" value="ECO:0007669"/>
    <property type="project" value="UniProtKB-UniRule"/>
</dbReference>
<dbReference type="GO" id="GO:0006281">
    <property type="term" value="P:DNA repair"/>
    <property type="evidence" value="ECO:0007669"/>
    <property type="project" value="UniProtKB-UniRule"/>
</dbReference>
<dbReference type="CDD" id="cd00080">
    <property type="entry name" value="H3TH_StructSpec-5'-nucleases"/>
    <property type="match status" value="1"/>
</dbReference>
<dbReference type="CDD" id="cd01025">
    <property type="entry name" value="TOPRIM_recR"/>
    <property type="match status" value="1"/>
</dbReference>
<dbReference type="Gene3D" id="3.30.60.80">
    <property type="match status" value="1"/>
</dbReference>
<dbReference type="Gene3D" id="3.40.1360.10">
    <property type="match status" value="1"/>
</dbReference>
<dbReference type="Gene3D" id="6.10.250.240">
    <property type="match status" value="1"/>
</dbReference>
<dbReference type="Gene3D" id="1.10.8.420">
    <property type="entry name" value="RecR Domain 1"/>
    <property type="match status" value="1"/>
</dbReference>
<dbReference type="HAMAP" id="MF_00017">
    <property type="entry name" value="RecR"/>
    <property type="match status" value="1"/>
</dbReference>
<dbReference type="InterPro" id="IPR000093">
    <property type="entry name" value="DNA_Rcmb_RecR"/>
</dbReference>
<dbReference type="InterPro" id="IPR003583">
    <property type="entry name" value="Hlx-hairpin-Hlx_DNA-bd_motif"/>
</dbReference>
<dbReference type="InterPro" id="IPR023627">
    <property type="entry name" value="Rcmb_RecR"/>
</dbReference>
<dbReference type="InterPro" id="IPR015967">
    <property type="entry name" value="Rcmb_RecR_Znf"/>
</dbReference>
<dbReference type="InterPro" id="IPR006171">
    <property type="entry name" value="TOPRIM_dom"/>
</dbReference>
<dbReference type="InterPro" id="IPR034137">
    <property type="entry name" value="TOPRIM_RecR"/>
</dbReference>
<dbReference type="NCBIfam" id="TIGR00615">
    <property type="entry name" value="recR"/>
    <property type="match status" value="1"/>
</dbReference>
<dbReference type="PANTHER" id="PTHR30446">
    <property type="entry name" value="RECOMBINATION PROTEIN RECR"/>
    <property type="match status" value="1"/>
</dbReference>
<dbReference type="PANTHER" id="PTHR30446:SF0">
    <property type="entry name" value="RECOMBINATION PROTEIN RECR"/>
    <property type="match status" value="1"/>
</dbReference>
<dbReference type="Pfam" id="PF21175">
    <property type="entry name" value="RecR_C"/>
    <property type="match status" value="1"/>
</dbReference>
<dbReference type="Pfam" id="PF21176">
    <property type="entry name" value="RecR_HhH"/>
    <property type="match status" value="1"/>
</dbReference>
<dbReference type="Pfam" id="PF02132">
    <property type="entry name" value="RecR_ZnF"/>
    <property type="match status" value="1"/>
</dbReference>
<dbReference type="Pfam" id="PF13662">
    <property type="entry name" value="Toprim_4"/>
    <property type="match status" value="1"/>
</dbReference>
<dbReference type="SMART" id="SM00278">
    <property type="entry name" value="HhH1"/>
    <property type="match status" value="1"/>
</dbReference>
<dbReference type="SMART" id="SM00493">
    <property type="entry name" value="TOPRIM"/>
    <property type="match status" value="1"/>
</dbReference>
<dbReference type="SUPFAM" id="SSF111304">
    <property type="entry name" value="Recombination protein RecR"/>
    <property type="match status" value="1"/>
</dbReference>
<dbReference type="PROSITE" id="PS01300">
    <property type="entry name" value="RECR"/>
    <property type="match status" value="1"/>
</dbReference>
<dbReference type="PROSITE" id="PS50880">
    <property type="entry name" value="TOPRIM"/>
    <property type="match status" value="1"/>
</dbReference>
<keyword id="KW-0227">DNA damage</keyword>
<keyword id="KW-0233">DNA recombination</keyword>
<keyword id="KW-0234">DNA repair</keyword>
<keyword id="KW-0479">Metal-binding</keyword>
<keyword id="KW-0862">Zinc</keyword>
<keyword id="KW-0863">Zinc-finger</keyword>
<feature type="chain" id="PRO_0000322918" description="Recombination protein RecR">
    <location>
        <begin position="1"/>
        <end position="203"/>
    </location>
</feature>
<feature type="domain" description="Toprim" evidence="1">
    <location>
        <begin position="79"/>
        <end position="179"/>
    </location>
</feature>
<feature type="zinc finger region" description="C4-type" evidence="1">
    <location>
        <begin position="56"/>
        <end position="71"/>
    </location>
</feature>
<comment type="function">
    <text evidence="1">May play a role in DNA repair. It seems to be involved in an RecBC-independent recombinational process of DNA repair. It may act with RecF and RecO.</text>
</comment>
<comment type="similarity">
    <text evidence="1">Belongs to the RecR family.</text>
</comment>
<protein>
    <recommendedName>
        <fullName evidence="1">Recombination protein RecR</fullName>
    </recommendedName>
</protein>
<evidence type="ECO:0000255" key="1">
    <source>
        <dbReference type="HAMAP-Rule" id="MF_00017"/>
    </source>
</evidence>
<proteinExistence type="inferred from homology"/>